<name>UBIC_SALA4</name>
<evidence type="ECO:0000255" key="1">
    <source>
        <dbReference type="HAMAP-Rule" id="MF_01632"/>
    </source>
</evidence>
<protein>
    <recommendedName>
        <fullName evidence="1">Chorismate pyruvate-lyase</fullName>
        <shortName evidence="1">CL</shortName>
        <shortName evidence="1">CPL</shortName>
        <ecNumber evidence="1">4.1.3.40</ecNumber>
    </recommendedName>
</protein>
<accession>B5F1Q2</accession>
<reference key="1">
    <citation type="journal article" date="2011" name="J. Bacteriol.">
        <title>Comparative genomics of 28 Salmonella enterica isolates: evidence for CRISPR-mediated adaptive sublineage evolution.</title>
        <authorList>
            <person name="Fricke W.F."/>
            <person name="Mammel M.K."/>
            <person name="McDermott P.F."/>
            <person name="Tartera C."/>
            <person name="White D.G."/>
            <person name="Leclerc J.E."/>
            <person name="Ravel J."/>
            <person name="Cebula T.A."/>
        </authorList>
    </citation>
    <scope>NUCLEOTIDE SEQUENCE [LARGE SCALE GENOMIC DNA]</scope>
    <source>
        <strain>SL483</strain>
    </source>
</reference>
<gene>
    <name evidence="1" type="primary">ubiC</name>
    <name type="ordered locus">SeAg_B4490</name>
</gene>
<organism>
    <name type="scientific">Salmonella agona (strain SL483)</name>
    <dbReference type="NCBI Taxonomy" id="454166"/>
    <lineage>
        <taxon>Bacteria</taxon>
        <taxon>Pseudomonadati</taxon>
        <taxon>Pseudomonadota</taxon>
        <taxon>Gammaproteobacteria</taxon>
        <taxon>Enterobacterales</taxon>
        <taxon>Enterobacteriaceae</taxon>
        <taxon>Salmonella</taxon>
    </lineage>
</organism>
<sequence>MSHPALTRLRALRYFDAIPALEPHLLDWLLLEDSMTKRFEQQGKRVSVTLIREAFVGQSEVEEASGLLPSESRYWLREILLCADGEPWLAGRTVVPESTLCGPEQVLQHLGKTPLGRYLFTSSTLTRDFIEIGRDATLWGRRSRLRLSGKPLLLTELFLPASPLY</sequence>
<feature type="chain" id="PRO_1000186531" description="Chorismate pyruvate-lyase">
    <location>
        <begin position="1"/>
        <end position="165"/>
    </location>
</feature>
<feature type="binding site" evidence="1">
    <location>
        <position position="35"/>
    </location>
    <ligand>
        <name>substrate</name>
    </ligand>
</feature>
<feature type="binding site" evidence="1">
    <location>
        <position position="77"/>
    </location>
    <ligand>
        <name>substrate</name>
    </ligand>
</feature>
<feature type="binding site" evidence="1">
    <location>
        <position position="115"/>
    </location>
    <ligand>
        <name>substrate</name>
    </ligand>
</feature>
<feature type="binding site" evidence="1">
    <location>
        <position position="156"/>
    </location>
    <ligand>
        <name>substrate</name>
    </ligand>
</feature>
<dbReference type="EC" id="4.1.3.40" evidence="1"/>
<dbReference type="EMBL" id="CP001138">
    <property type="protein sequence ID" value="ACH50408.1"/>
    <property type="molecule type" value="Genomic_DNA"/>
</dbReference>
<dbReference type="RefSeq" id="WP_000019230.1">
    <property type="nucleotide sequence ID" value="NC_011149.1"/>
</dbReference>
<dbReference type="SMR" id="B5F1Q2"/>
<dbReference type="KEGG" id="sea:SeAg_B4490"/>
<dbReference type="HOGENOM" id="CLU_096824_1_0_6"/>
<dbReference type="UniPathway" id="UPA00232"/>
<dbReference type="Proteomes" id="UP000008819">
    <property type="component" value="Chromosome"/>
</dbReference>
<dbReference type="GO" id="GO:0005829">
    <property type="term" value="C:cytosol"/>
    <property type="evidence" value="ECO:0007669"/>
    <property type="project" value="TreeGrafter"/>
</dbReference>
<dbReference type="GO" id="GO:0008813">
    <property type="term" value="F:chorismate lyase activity"/>
    <property type="evidence" value="ECO:0007669"/>
    <property type="project" value="UniProtKB-UniRule"/>
</dbReference>
<dbReference type="GO" id="GO:0042866">
    <property type="term" value="P:pyruvate biosynthetic process"/>
    <property type="evidence" value="ECO:0007669"/>
    <property type="project" value="UniProtKB-UniRule"/>
</dbReference>
<dbReference type="GO" id="GO:0006744">
    <property type="term" value="P:ubiquinone biosynthetic process"/>
    <property type="evidence" value="ECO:0007669"/>
    <property type="project" value="UniProtKB-UniRule"/>
</dbReference>
<dbReference type="FunFam" id="3.40.1410.10:FF:000002">
    <property type="entry name" value="Chorismate pyruvate-lyase"/>
    <property type="match status" value="1"/>
</dbReference>
<dbReference type="Gene3D" id="3.40.1410.10">
    <property type="entry name" value="Chorismate lyase-like"/>
    <property type="match status" value="1"/>
</dbReference>
<dbReference type="HAMAP" id="MF_01632">
    <property type="entry name" value="UbiC"/>
    <property type="match status" value="1"/>
</dbReference>
<dbReference type="InterPro" id="IPR007440">
    <property type="entry name" value="Chorismate--pyruvate_lyase"/>
</dbReference>
<dbReference type="InterPro" id="IPR028978">
    <property type="entry name" value="Chorismate_lyase_/UTRA_dom_sf"/>
</dbReference>
<dbReference type="NCBIfam" id="NF008656">
    <property type="entry name" value="PRK11655.1"/>
    <property type="match status" value="1"/>
</dbReference>
<dbReference type="PANTHER" id="PTHR38683">
    <property type="entry name" value="CHORISMATE PYRUVATE-LYASE"/>
    <property type="match status" value="1"/>
</dbReference>
<dbReference type="PANTHER" id="PTHR38683:SF1">
    <property type="entry name" value="CHORISMATE PYRUVATE-LYASE"/>
    <property type="match status" value="1"/>
</dbReference>
<dbReference type="Pfam" id="PF04345">
    <property type="entry name" value="Chor_lyase"/>
    <property type="match status" value="1"/>
</dbReference>
<dbReference type="SUPFAM" id="SSF64288">
    <property type="entry name" value="Chorismate lyase-like"/>
    <property type="match status" value="1"/>
</dbReference>
<keyword id="KW-0963">Cytoplasm</keyword>
<keyword id="KW-0456">Lyase</keyword>
<keyword id="KW-0670">Pyruvate</keyword>
<keyword id="KW-0831">Ubiquinone biosynthesis</keyword>
<comment type="function">
    <text evidence="1">Removes the pyruvyl group from chorismate, with concomitant aromatization of the ring, to provide 4-hydroxybenzoate (4HB) for the ubiquinone pathway.</text>
</comment>
<comment type="catalytic activity">
    <reaction evidence="1">
        <text>chorismate = 4-hydroxybenzoate + pyruvate</text>
        <dbReference type="Rhea" id="RHEA:16505"/>
        <dbReference type="ChEBI" id="CHEBI:15361"/>
        <dbReference type="ChEBI" id="CHEBI:17879"/>
        <dbReference type="ChEBI" id="CHEBI:29748"/>
        <dbReference type="EC" id="4.1.3.40"/>
    </reaction>
</comment>
<comment type="pathway">
    <text evidence="1">Cofactor biosynthesis; ubiquinone biosynthesis.</text>
</comment>
<comment type="subunit">
    <text evidence="1">Monomer.</text>
</comment>
<comment type="subcellular location">
    <subcellularLocation>
        <location evidence="1">Cytoplasm</location>
    </subcellularLocation>
</comment>
<comment type="similarity">
    <text evidence="1">Belongs to the UbiC family.</text>
</comment>
<proteinExistence type="inferred from homology"/>